<sequence length="162" mass="18827">MIELFMKQKMFSFKDAFHIYDRDEQETFKVEGRFFSLGDSLQMTDSSGKTLVSIEQKLMSLLPRYEISIGGKTVCEVTKKVTFSKPKFVISGLNWEIDGDLWRDEFQLTDGENVRMSVSKKWLSWGDSYHLQIAYEEDVLICTAIAIVLDMVLYNDEDESIF</sequence>
<dbReference type="EMBL" id="D83026">
    <property type="protein sequence ID" value="BAA11710.1"/>
    <property type="molecule type" value="Genomic_DNA"/>
</dbReference>
<dbReference type="EMBL" id="AL009126">
    <property type="protein sequence ID" value="CAB15920.1"/>
    <property type="molecule type" value="Genomic_DNA"/>
</dbReference>
<dbReference type="PIR" id="G70079">
    <property type="entry name" value="G70079"/>
</dbReference>
<dbReference type="RefSeq" id="NP_391773.1">
    <property type="nucleotide sequence ID" value="NC_000964.3"/>
</dbReference>
<dbReference type="RefSeq" id="WP_003242923.1">
    <property type="nucleotide sequence ID" value="NZ_OZ025638.1"/>
</dbReference>
<dbReference type="SMR" id="P94352"/>
<dbReference type="FunCoup" id="P94352">
    <property type="interactions" value="6"/>
</dbReference>
<dbReference type="STRING" id="224308.BSU38940"/>
<dbReference type="PaxDb" id="224308-BSU38940"/>
<dbReference type="EnsemblBacteria" id="CAB15920">
    <property type="protein sequence ID" value="CAB15920"/>
    <property type="gene ID" value="BSU_38940"/>
</dbReference>
<dbReference type="GeneID" id="937439"/>
<dbReference type="KEGG" id="bsu:BSU38940"/>
<dbReference type="PATRIC" id="fig|224308.179.peg.4214"/>
<dbReference type="eggNOG" id="COG4894">
    <property type="taxonomic scope" value="Bacteria"/>
</dbReference>
<dbReference type="InParanoid" id="P94352"/>
<dbReference type="OrthoDB" id="652307at2"/>
<dbReference type="PhylomeDB" id="P94352"/>
<dbReference type="BioCyc" id="BSUB:BSU38940-MONOMER"/>
<dbReference type="Proteomes" id="UP000001570">
    <property type="component" value="Chromosome"/>
</dbReference>
<dbReference type="Gene3D" id="2.40.160.200">
    <property type="entry name" value="LURP1-related"/>
    <property type="match status" value="1"/>
</dbReference>
<dbReference type="InterPro" id="IPR007612">
    <property type="entry name" value="LOR"/>
</dbReference>
<dbReference type="InterPro" id="IPR038595">
    <property type="entry name" value="LOR_sf"/>
</dbReference>
<dbReference type="InterPro" id="IPR025659">
    <property type="entry name" value="Tubby-like_C"/>
</dbReference>
<dbReference type="Pfam" id="PF04525">
    <property type="entry name" value="LOR"/>
    <property type="match status" value="1"/>
</dbReference>
<dbReference type="SUPFAM" id="SSF54518">
    <property type="entry name" value="Tubby C-terminal domain-like"/>
    <property type="match status" value="1"/>
</dbReference>
<comment type="similarity">
    <text evidence="1">Belongs to the LOR family.</text>
</comment>
<evidence type="ECO:0000305" key="1"/>
<protein>
    <recommendedName>
        <fullName>Uncharacterized protein YxjI</fullName>
    </recommendedName>
</protein>
<name>YXJI_BACSU</name>
<proteinExistence type="inferred from homology"/>
<keyword id="KW-1185">Reference proteome</keyword>
<accession>P94352</accession>
<accession>Q794X4</accession>
<organism>
    <name type="scientific">Bacillus subtilis (strain 168)</name>
    <dbReference type="NCBI Taxonomy" id="224308"/>
    <lineage>
        <taxon>Bacteria</taxon>
        <taxon>Bacillati</taxon>
        <taxon>Bacillota</taxon>
        <taxon>Bacilli</taxon>
        <taxon>Bacillales</taxon>
        <taxon>Bacillaceae</taxon>
        <taxon>Bacillus</taxon>
    </lineage>
</organism>
<feature type="chain" id="PRO_0000360218" description="Uncharacterized protein YxjI">
    <location>
        <begin position="1"/>
        <end position="162"/>
    </location>
</feature>
<gene>
    <name type="primary">yxjI</name>
    <name type="ordered locus">BSU38940</name>
</gene>
<reference key="1">
    <citation type="journal article" date="1996" name="Microbiology">
        <title>Sequencing of a 65 kb region of the Bacillus subtilis genome containing the lic and cel loci, and creation of a 177 kb contig covering the gnt-sacXY region.</title>
        <authorList>
            <person name="Yoshida K."/>
            <person name="Shindo K."/>
            <person name="Sano H."/>
            <person name="Seki S."/>
            <person name="Fujimura M."/>
            <person name="Yanai N."/>
            <person name="Miwa Y."/>
            <person name="Fujita Y."/>
        </authorList>
    </citation>
    <scope>NUCLEOTIDE SEQUENCE [GENOMIC DNA]</scope>
    <source>
        <strain>168 / BGSC1A1</strain>
    </source>
</reference>
<reference key="2">
    <citation type="journal article" date="1997" name="Nature">
        <title>The complete genome sequence of the Gram-positive bacterium Bacillus subtilis.</title>
        <authorList>
            <person name="Kunst F."/>
            <person name="Ogasawara N."/>
            <person name="Moszer I."/>
            <person name="Albertini A.M."/>
            <person name="Alloni G."/>
            <person name="Azevedo V."/>
            <person name="Bertero M.G."/>
            <person name="Bessieres P."/>
            <person name="Bolotin A."/>
            <person name="Borchert S."/>
            <person name="Borriss R."/>
            <person name="Boursier L."/>
            <person name="Brans A."/>
            <person name="Braun M."/>
            <person name="Brignell S.C."/>
            <person name="Bron S."/>
            <person name="Brouillet S."/>
            <person name="Bruschi C.V."/>
            <person name="Caldwell B."/>
            <person name="Capuano V."/>
            <person name="Carter N.M."/>
            <person name="Choi S.-K."/>
            <person name="Codani J.-J."/>
            <person name="Connerton I.F."/>
            <person name="Cummings N.J."/>
            <person name="Daniel R.A."/>
            <person name="Denizot F."/>
            <person name="Devine K.M."/>
            <person name="Duesterhoeft A."/>
            <person name="Ehrlich S.D."/>
            <person name="Emmerson P.T."/>
            <person name="Entian K.-D."/>
            <person name="Errington J."/>
            <person name="Fabret C."/>
            <person name="Ferrari E."/>
            <person name="Foulger D."/>
            <person name="Fritz C."/>
            <person name="Fujita M."/>
            <person name="Fujita Y."/>
            <person name="Fuma S."/>
            <person name="Galizzi A."/>
            <person name="Galleron N."/>
            <person name="Ghim S.-Y."/>
            <person name="Glaser P."/>
            <person name="Goffeau A."/>
            <person name="Golightly E.J."/>
            <person name="Grandi G."/>
            <person name="Guiseppi G."/>
            <person name="Guy B.J."/>
            <person name="Haga K."/>
            <person name="Haiech J."/>
            <person name="Harwood C.R."/>
            <person name="Henaut A."/>
            <person name="Hilbert H."/>
            <person name="Holsappel S."/>
            <person name="Hosono S."/>
            <person name="Hullo M.-F."/>
            <person name="Itaya M."/>
            <person name="Jones L.-M."/>
            <person name="Joris B."/>
            <person name="Karamata D."/>
            <person name="Kasahara Y."/>
            <person name="Klaerr-Blanchard M."/>
            <person name="Klein C."/>
            <person name="Kobayashi Y."/>
            <person name="Koetter P."/>
            <person name="Koningstein G."/>
            <person name="Krogh S."/>
            <person name="Kumano M."/>
            <person name="Kurita K."/>
            <person name="Lapidus A."/>
            <person name="Lardinois S."/>
            <person name="Lauber J."/>
            <person name="Lazarevic V."/>
            <person name="Lee S.-M."/>
            <person name="Levine A."/>
            <person name="Liu H."/>
            <person name="Masuda S."/>
            <person name="Mauel C."/>
            <person name="Medigue C."/>
            <person name="Medina N."/>
            <person name="Mellado R.P."/>
            <person name="Mizuno M."/>
            <person name="Moestl D."/>
            <person name="Nakai S."/>
            <person name="Noback M."/>
            <person name="Noone D."/>
            <person name="O'Reilly M."/>
            <person name="Ogawa K."/>
            <person name="Ogiwara A."/>
            <person name="Oudega B."/>
            <person name="Park S.-H."/>
            <person name="Parro V."/>
            <person name="Pohl T.M."/>
            <person name="Portetelle D."/>
            <person name="Porwollik S."/>
            <person name="Prescott A.M."/>
            <person name="Presecan E."/>
            <person name="Pujic P."/>
            <person name="Purnelle B."/>
            <person name="Rapoport G."/>
            <person name="Rey M."/>
            <person name="Reynolds S."/>
            <person name="Rieger M."/>
            <person name="Rivolta C."/>
            <person name="Rocha E."/>
            <person name="Roche B."/>
            <person name="Rose M."/>
            <person name="Sadaie Y."/>
            <person name="Sato T."/>
            <person name="Scanlan E."/>
            <person name="Schleich S."/>
            <person name="Schroeter R."/>
            <person name="Scoffone F."/>
            <person name="Sekiguchi J."/>
            <person name="Sekowska A."/>
            <person name="Seror S.J."/>
            <person name="Serror P."/>
            <person name="Shin B.-S."/>
            <person name="Soldo B."/>
            <person name="Sorokin A."/>
            <person name="Tacconi E."/>
            <person name="Takagi T."/>
            <person name="Takahashi H."/>
            <person name="Takemaru K."/>
            <person name="Takeuchi M."/>
            <person name="Tamakoshi A."/>
            <person name="Tanaka T."/>
            <person name="Terpstra P."/>
            <person name="Tognoni A."/>
            <person name="Tosato V."/>
            <person name="Uchiyama S."/>
            <person name="Vandenbol M."/>
            <person name="Vannier F."/>
            <person name="Vassarotti A."/>
            <person name="Viari A."/>
            <person name="Wambutt R."/>
            <person name="Wedler E."/>
            <person name="Wedler H."/>
            <person name="Weitzenegger T."/>
            <person name="Winters P."/>
            <person name="Wipat A."/>
            <person name="Yamamoto H."/>
            <person name="Yamane K."/>
            <person name="Yasumoto K."/>
            <person name="Yata K."/>
            <person name="Yoshida K."/>
            <person name="Yoshikawa H.-F."/>
            <person name="Zumstein E."/>
            <person name="Yoshikawa H."/>
            <person name="Danchin A."/>
        </authorList>
    </citation>
    <scope>NUCLEOTIDE SEQUENCE [LARGE SCALE GENOMIC DNA]</scope>
    <source>
        <strain>168</strain>
    </source>
</reference>